<feature type="chain" id="PRO_0000351959" description="Protein-L-isoaspartate O-methyltransferase">
    <location>
        <begin position="1"/>
        <end position="225"/>
    </location>
</feature>
<feature type="active site" evidence="1">
    <location>
        <position position="75"/>
    </location>
</feature>
<dbReference type="EC" id="2.1.1.77" evidence="1"/>
<dbReference type="EMBL" id="AE003849">
    <property type="protein sequence ID" value="AAF83667.1"/>
    <property type="molecule type" value="Genomic_DNA"/>
</dbReference>
<dbReference type="PIR" id="C82754">
    <property type="entry name" value="C82754"/>
</dbReference>
<dbReference type="RefSeq" id="WP_010893377.1">
    <property type="nucleotide sequence ID" value="NC_002488.3"/>
</dbReference>
<dbReference type="SMR" id="Q9PF21"/>
<dbReference type="STRING" id="160492.XF_0857"/>
<dbReference type="KEGG" id="xfa:XF_0857"/>
<dbReference type="eggNOG" id="COG2518">
    <property type="taxonomic scope" value="Bacteria"/>
</dbReference>
<dbReference type="HOGENOM" id="CLU_055432_2_0_6"/>
<dbReference type="Proteomes" id="UP000000812">
    <property type="component" value="Chromosome"/>
</dbReference>
<dbReference type="GO" id="GO:0005737">
    <property type="term" value="C:cytoplasm"/>
    <property type="evidence" value="ECO:0007669"/>
    <property type="project" value="UniProtKB-SubCell"/>
</dbReference>
<dbReference type="GO" id="GO:0004719">
    <property type="term" value="F:protein-L-isoaspartate (D-aspartate) O-methyltransferase activity"/>
    <property type="evidence" value="ECO:0007669"/>
    <property type="project" value="UniProtKB-UniRule"/>
</dbReference>
<dbReference type="GO" id="GO:0032259">
    <property type="term" value="P:methylation"/>
    <property type="evidence" value="ECO:0007669"/>
    <property type="project" value="UniProtKB-KW"/>
</dbReference>
<dbReference type="GO" id="GO:0036211">
    <property type="term" value="P:protein modification process"/>
    <property type="evidence" value="ECO:0007669"/>
    <property type="project" value="UniProtKB-UniRule"/>
</dbReference>
<dbReference type="GO" id="GO:0030091">
    <property type="term" value="P:protein repair"/>
    <property type="evidence" value="ECO:0007669"/>
    <property type="project" value="UniProtKB-UniRule"/>
</dbReference>
<dbReference type="FunFam" id="3.40.50.150:FF:000010">
    <property type="entry name" value="Protein-L-isoaspartate O-methyltransferase"/>
    <property type="match status" value="1"/>
</dbReference>
<dbReference type="Gene3D" id="3.40.50.150">
    <property type="entry name" value="Vaccinia Virus protein VP39"/>
    <property type="match status" value="1"/>
</dbReference>
<dbReference type="HAMAP" id="MF_00090">
    <property type="entry name" value="PIMT"/>
    <property type="match status" value="1"/>
</dbReference>
<dbReference type="InterPro" id="IPR000682">
    <property type="entry name" value="PCMT"/>
</dbReference>
<dbReference type="InterPro" id="IPR029063">
    <property type="entry name" value="SAM-dependent_MTases_sf"/>
</dbReference>
<dbReference type="NCBIfam" id="TIGR00080">
    <property type="entry name" value="pimt"/>
    <property type="match status" value="1"/>
</dbReference>
<dbReference type="NCBIfam" id="NF001453">
    <property type="entry name" value="PRK00312.1"/>
    <property type="match status" value="1"/>
</dbReference>
<dbReference type="PANTHER" id="PTHR11579">
    <property type="entry name" value="PROTEIN-L-ISOASPARTATE O-METHYLTRANSFERASE"/>
    <property type="match status" value="1"/>
</dbReference>
<dbReference type="PANTHER" id="PTHR11579:SF0">
    <property type="entry name" value="PROTEIN-L-ISOASPARTATE(D-ASPARTATE) O-METHYLTRANSFERASE"/>
    <property type="match status" value="1"/>
</dbReference>
<dbReference type="Pfam" id="PF01135">
    <property type="entry name" value="PCMT"/>
    <property type="match status" value="1"/>
</dbReference>
<dbReference type="SUPFAM" id="SSF53335">
    <property type="entry name" value="S-adenosyl-L-methionine-dependent methyltransferases"/>
    <property type="match status" value="1"/>
</dbReference>
<dbReference type="PROSITE" id="PS01279">
    <property type="entry name" value="PCMT"/>
    <property type="match status" value="1"/>
</dbReference>
<comment type="function">
    <text evidence="1">Catalyzes the methyl esterification of L-isoaspartyl residues in peptides and proteins that result from spontaneous decomposition of normal L-aspartyl and L-asparaginyl residues. It plays a role in the repair and/or degradation of damaged proteins.</text>
</comment>
<comment type="catalytic activity">
    <reaction evidence="1">
        <text>[protein]-L-isoaspartate + S-adenosyl-L-methionine = [protein]-L-isoaspartate alpha-methyl ester + S-adenosyl-L-homocysteine</text>
        <dbReference type="Rhea" id="RHEA:12705"/>
        <dbReference type="Rhea" id="RHEA-COMP:12143"/>
        <dbReference type="Rhea" id="RHEA-COMP:12144"/>
        <dbReference type="ChEBI" id="CHEBI:57856"/>
        <dbReference type="ChEBI" id="CHEBI:59789"/>
        <dbReference type="ChEBI" id="CHEBI:90596"/>
        <dbReference type="ChEBI" id="CHEBI:90598"/>
        <dbReference type="EC" id="2.1.1.77"/>
    </reaction>
</comment>
<comment type="subcellular location">
    <subcellularLocation>
        <location evidence="1">Cytoplasm</location>
    </subcellularLocation>
</comment>
<comment type="similarity">
    <text evidence="1">Belongs to the methyltransferase superfamily. L-isoaspartyl/D-aspartyl protein methyltransferase family.</text>
</comment>
<keyword id="KW-0963">Cytoplasm</keyword>
<keyword id="KW-0489">Methyltransferase</keyword>
<keyword id="KW-0949">S-adenosyl-L-methionine</keyword>
<keyword id="KW-0808">Transferase</keyword>
<protein>
    <recommendedName>
        <fullName evidence="1">Protein-L-isoaspartate O-methyltransferase</fullName>
        <ecNumber evidence="1">2.1.1.77</ecNumber>
    </recommendedName>
    <alternativeName>
        <fullName evidence="1">L-isoaspartyl protein carboxyl methyltransferase</fullName>
    </alternativeName>
    <alternativeName>
        <fullName evidence="1">Protein L-isoaspartyl methyltransferase</fullName>
    </alternativeName>
    <alternativeName>
        <fullName evidence="1">Protein-beta-aspartate methyltransferase</fullName>
        <shortName evidence="1">PIMT</shortName>
    </alternativeName>
</protein>
<sequence length="225" mass="24589">MTAPASLQAKAVGIGMTSQRVRDRLVERLRECGIQDERVLTTIRIVPRHLFIDEALALRAYEDTALPIGHGQTISQPWVVARMTEAVMQVAPKKILEIGTGSGYQSAILASLGLEVYTIERIGKLLRQARKRFRQLGIKIRSKHDDGSIGWTEHAPYNAILVTAAAPTLIDTLIEQLAIGGRLVAPVGTASEQALVQLTRTIDGNITHEILEPVTFVSLLPGMLD</sequence>
<accession>Q9PF21</accession>
<name>PIMT_XYLFA</name>
<proteinExistence type="inferred from homology"/>
<organism>
    <name type="scientific">Xylella fastidiosa (strain 9a5c)</name>
    <dbReference type="NCBI Taxonomy" id="160492"/>
    <lineage>
        <taxon>Bacteria</taxon>
        <taxon>Pseudomonadati</taxon>
        <taxon>Pseudomonadota</taxon>
        <taxon>Gammaproteobacteria</taxon>
        <taxon>Lysobacterales</taxon>
        <taxon>Lysobacteraceae</taxon>
        <taxon>Xylella</taxon>
    </lineage>
</organism>
<gene>
    <name evidence="1" type="primary">pcm</name>
    <name type="ordered locus">XF_0857</name>
</gene>
<reference key="1">
    <citation type="journal article" date="2000" name="Nature">
        <title>The genome sequence of the plant pathogen Xylella fastidiosa.</title>
        <authorList>
            <person name="Simpson A.J.G."/>
            <person name="Reinach F.C."/>
            <person name="Arruda P."/>
            <person name="Abreu F.A."/>
            <person name="Acencio M."/>
            <person name="Alvarenga R."/>
            <person name="Alves L.M.C."/>
            <person name="Araya J.E."/>
            <person name="Baia G.S."/>
            <person name="Baptista C.S."/>
            <person name="Barros M.H."/>
            <person name="Bonaccorsi E.D."/>
            <person name="Bordin S."/>
            <person name="Bove J.M."/>
            <person name="Briones M.R.S."/>
            <person name="Bueno M.R.P."/>
            <person name="Camargo A.A."/>
            <person name="Camargo L.E.A."/>
            <person name="Carraro D.M."/>
            <person name="Carrer H."/>
            <person name="Colauto N.B."/>
            <person name="Colombo C."/>
            <person name="Costa F.F."/>
            <person name="Costa M.C.R."/>
            <person name="Costa-Neto C.M."/>
            <person name="Coutinho L.L."/>
            <person name="Cristofani M."/>
            <person name="Dias-Neto E."/>
            <person name="Docena C."/>
            <person name="El-Dorry H."/>
            <person name="Facincani A.P."/>
            <person name="Ferreira A.J.S."/>
            <person name="Ferreira V.C.A."/>
            <person name="Ferro J.A."/>
            <person name="Fraga J.S."/>
            <person name="Franca S.C."/>
            <person name="Franco M.C."/>
            <person name="Frohme M."/>
            <person name="Furlan L.R."/>
            <person name="Garnier M."/>
            <person name="Goldman G.H."/>
            <person name="Goldman M.H.S."/>
            <person name="Gomes S.L."/>
            <person name="Gruber A."/>
            <person name="Ho P.L."/>
            <person name="Hoheisel J.D."/>
            <person name="Junqueira M.L."/>
            <person name="Kemper E.L."/>
            <person name="Kitajima J.P."/>
            <person name="Krieger J.E."/>
            <person name="Kuramae E.E."/>
            <person name="Laigret F."/>
            <person name="Lambais M.R."/>
            <person name="Leite L.C.C."/>
            <person name="Lemos E.G.M."/>
            <person name="Lemos M.V.F."/>
            <person name="Lopes S.A."/>
            <person name="Lopes C.R."/>
            <person name="Machado J.A."/>
            <person name="Machado M.A."/>
            <person name="Madeira A.M.B.N."/>
            <person name="Madeira H.M.F."/>
            <person name="Marino C.L."/>
            <person name="Marques M.V."/>
            <person name="Martins E.A.L."/>
            <person name="Martins E.M.F."/>
            <person name="Matsukuma A.Y."/>
            <person name="Menck C.F.M."/>
            <person name="Miracca E.C."/>
            <person name="Miyaki C.Y."/>
            <person name="Monteiro-Vitorello C.B."/>
            <person name="Moon D.H."/>
            <person name="Nagai M.A."/>
            <person name="Nascimento A.L.T.O."/>
            <person name="Netto L.E.S."/>
            <person name="Nhani A. Jr."/>
            <person name="Nobrega F.G."/>
            <person name="Nunes L.R."/>
            <person name="Oliveira M.A."/>
            <person name="de Oliveira M.C."/>
            <person name="de Oliveira R.C."/>
            <person name="Palmieri D.A."/>
            <person name="Paris A."/>
            <person name="Peixoto B.R."/>
            <person name="Pereira G.A.G."/>
            <person name="Pereira H.A. Jr."/>
            <person name="Pesquero J.B."/>
            <person name="Quaggio R.B."/>
            <person name="Roberto P.G."/>
            <person name="Rodrigues V."/>
            <person name="de Rosa A.J.M."/>
            <person name="de Rosa V.E. Jr."/>
            <person name="de Sa R.G."/>
            <person name="Santelli R.V."/>
            <person name="Sawasaki H.E."/>
            <person name="da Silva A.C.R."/>
            <person name="da Silva A.M."/>
            <person name="da Silva F.R."/>
            <person name="Silva W.A. Jr."/>
            <person name="da Silveira J.F."/>
            <person name="Silvestri M.L.Z."/>
            <person name="Siqueira W.J."/>
            <person name="de Souza A.A."/>
            <person name="de Souza A.P."/>
            <person name="Terenzi M.F."/>
            <person name="Truffi D."/>
            <person name="Tsai S.M."/>
            <person name="Tsuhako M.H."/>
            <person name="Vallada H."/>
            <person name="Van Sluys M.A."/>
            <person name="Verjovski-Almeida S."/>
            <person name="Vettore A.L."/>
            <person name="Zago M.A."/>
            <person name="Zatz M."/>
            <person name="Meidanis J."/>
            <person name="Setubal J.C."/>
        </authorList>
    </citation>
    <scope>NUCLEOTIDE SEQUENCE [LARGE SCALE GENOMIC DNA]</scope>
    <source>
        <strain>9a5c</strain>
    </source>
</reference>
<evidence type="ECO:0000255" key="1">
    <source>
        <dbReference type="HAMAP-Rule" id="MF_00090"/>
    </source>
</evidence>